<organism>
    <name type="scientific">Gallus gallus</name>
    <name type="common">Chicken</name>
    <dbReference type="NCBI Taxonomy" id="9031"/>
    <lineage>
        <taxon>Eukaryota</taxon>
        <taxon>Metazoa</taxon>
        <taxon>Chordata</taxon>
        <taxon>Craniata</taxon>
        <taxon>Vertebrata</taxon>
        <taxon>Euteleostomi</taxon>
        <taxon>Archelosauria</taxon>
        <taxon>Archosauria</taxon>
        <taxon>Dinosauria</taxon>
        <taxon>Saurischia</taxon>
        <taxon>Theropoda</taxon>
        <taxon>Coelurosauria</taxon>
        <taxon>Aves</taxon>
        <taxon>Neognathae</taxon>
        <taxon>Galloanserae</taxon>
        <taxon>Galliformes</taxon>
        <taxon>Phasianidae</taxon>
        <taxon>Phasianinae</taxon>
        <taxon>Gallus</taxon>
    </lineage>
</organism>
<comment type="function">
    <text evidence="2">Required for the assembly of the V0 complex of the vacuolar ATPase (V-ATPase) in the endoplasmic reticulum.</text>
</comment>
<comment type="subunit">
    <text evidence="1">Associates with the V0 complex of the vacuolar ATPase (V-ATPase) (By similarity). Interacts with ATP6AP2 (By similarity).</text>
</comment>
<comment type="subcellular location">
    <subcellularLocation>
        <location evidence="3">Endoplasmic reticulum membrane</location>
        <topology evidence="3">Multi-pass membrane protein</topology>
    </subcellularLocation>
    <subcellularLocation>
        <location evidence="3">Endoplasmic reticulum-Golgi intermediate compartment membrane</location>
        <topology evidence="3">Multi-pass membrane protein</topology>
    </subcellularLocation>
    <subcellularLocation>
        <location evidence="3">Cytoplasmic vesicle</location>
        <location evidence="3">COPII-coated vesicle membrane</location>
        <topology evidence="3">Multi-pass membrane protein</topology>
    </subcellularLocation>
</comment>
<comment type="similarity">
    <text evidence="3">Belongs to the VMA21 family.</text>
</comment>
<feature type="chain" id="PRO_0000331502" description="Vacuolar ATPase assembly integral membrane protein VMA21">
    <location>
        <begin position="1"/>
        <end position="102"/>
    </location>
</feature>
<feature type="topological domain" description="Cytoplasmic" evidence="3">
    <location>
        <begin position="1"/>
        <end position="30"/>
    </location>
</feature>
<feature type="transmembrane region" description="Helical" evidence="3">
    <location>
        <begin position="31"/>
        <end position="51"/>
    </location>
</feature>
<feature type="topological domain" description="Lumenal" evidence="3">
    <location>
        <begin position="52"/>
        <end position="66"/>
    </location>
</feature>
<feature type="transmembrane region" description="Helical" evidence="3">
    <location>
        <begin position="67"/>
        <end position="87"/>
    </location>
</feature>
<feature type="topological domain" description="Cytoplasmic" evidence="3">
    <location>
        <begin position="88"/>
        <end position="102"/>
    </location>
</feature>
<dbReference type="EMBL" id="AJ719724">
    <property type="protein sequence ID" value="CAG31383.1"/>
    <property type="molecule type" value="mRNA"/>
</dbReference>
<dbReference type="RefSeq" id="NP_001026298.1">
    <property type="nucleotide sequence ID" value="NM_001031127.2"/>
</dbReference>
<dbReference type="SMR" id="Q5ZLL0"/>
<dbReference type="FunCoup" id="Q5ZLL0">
    <property type="interactions" value="283"/>
</dbReference>
<dbReference type="STRING" id="9031.ENSGALP00000014737"/>
<dbReference type="PaxDb" id="9031-ENSGALP00000014737"/>
<dbReference type="Ensembl" id="ENSGALT00010027201.1">
    <property type="protein sequence ID" value="ENSGALP00010015490.1"/>
    <property type="gene ID" value="ENSGALG00010011372.1"/>
</dbReference>
<dbReference type="GeneID" id="422385"/>
<dbReference type="KEGG" id="gga:422385"/>
<dbReference type="CTD" id="203547"/>
<dbReference type="VEuPathDB" id="HostDB:geneid_422385"/>
<dbReference type="eggNOG" id="KOG4783">
    <property type="taxonomic scope" value="Eukaryota"/>
</dbReference>
<dbReference type="GeneTree" id="ENSGT00390000017980"/>
<dbReference type="InParanoid" id="Q5ZLL0"/>
<dbReference type="OMA" id="PYFRGNE"/>
<dbReference type="OrthoDB" id="160405at2759"/>
<dbReference type="PhylomeDB" id="Q5ZLL0"/>
<dbReference type="PRO" id="PR:Q5ZLL0"/>
<dbReference type="Proteomes" id="UP000000539">
    <property type="component" value="Chromosome 4"/>
</dbReference>
<dbReference type="GO" id="GO:0005789">
    <property type="term" value="C:endoplasmic reticulum membrane"/>
    <property type="evidence" value="ECO:0000318"/>
    <property type="project" value="GO_Central"/>
</dbReference>
<dbReference type="GO" id="GO:0033116">
    <property type="term" value="C:endoplasmic reticulum-Golgi intermediate compartment membrane"/>
    <property type="evidence" value="ECO:0007669"/>
    <property type="project" value="UniProtKB-SubCell"/>
</dbReference>
<dbReference type="GO" id="GO:0012507">
    <property type="term" value="C:ER to Golgi transport vesicle membrane"/>
    <property type="evidence" value="ECO:0007669"/>
    <property type="project" value="UniProtKB-SubCell"/>
</dbReference>
<dbReference type="GO" id="GO:0005764">
    <property type="term" value="C:lysosome"/>
    <property type="evidence" value="ECO:0007669"/>
    <property type="project" value="Ensembl"/>
</dbReference>
<dbReference type="GO" id="GO:0070072">
    <property type="term" value="P:vacuolar proton-transporting V-type ATPase complex assembly"/>
    <property type="evidence" value="ECO:0000318"/>
    <property type="project" value="GO_Central"/>
</dbReference>
<dbReference type="HAMAP" id="MF_03058">
    <property type="entry name" value="VMA21"/>
    <property type="match status" value="1"/>
</dbReference>
<dbReference type="InterPro" id="IPR019013">
    <property type="entry name" value="Vma21"/>
</dbReference>
<dbReference type="PANTHER" id="PTHR31792">
    <property type="entry name" value="VACUOLAR ATPASE ASSEMBLY INTEGRAL MEMBRANE PROTEIN VMA21"/>
    <property type="match status" value="1"/>
</dbReference>
<dbReference type="PANTHER" id="PTHR31792:SF3">
    <property type="entry name" value="VACUOLAR ATPASE ASSEMBLY INTEGRAL MEMBRANE PROTEIN VMA21"/>
    <property type="match status" value="1"/>
</dbReference>
<dbReference type="Pfam" id="PF09446">
    <property type="entry name" value="VMA21"/>
    <property type="match status" value="1"/>
</dbReference>
<sequence>MERYDKATLNAAFAPEFRQNEGSLTSTLRTLLFFTALMITLPVGLYFSSKAYIFEGTLGMSNRDSYFYAAIVAVVTVHVVLAMFVYVAWSEGTRQWREGKQD</sequence>
<accession>Q5ZLL0</accession>
<gene>
    <name evidence="3" type="primary">VMA21</name>
    <name type="ORF">RCJMB04_5k12</name>
</gene>
<reference key="1">
    <citation type="journal article" date="2005" name="Genome Biol.">
        <title>Full-length cDNAs from chicken bursal lymphocytes to facilitate gene function analysis.</title>
        <authorList>
            <person name="Caldwell R.B."/>
            <person name="Kierzek A.M."/>
            <person name="Arakawa H."/>
            <person name="Bezzubov Y."/>
            <person name="Zaim J."/>
            <person name="Fiedler P."/>
            <person name="Kutter S."/>
            <person name="Blagodatski A."/>
            <person name="Kostovska D."/>
            <person name="Koter M."/>
            <person name="Plachy J."/>
            <person name="Carninci P."/>
            <person name="Hayashizaki Y."/>
            <person name="Buerstedde J.-M."/>
        </authorList>
    </citation>
    <scope>NUCLEOTIDE SEQUENCE [LARGE SCALE MRNA]</scope>
    <source>
        <strain>CB</strain>
        <tissue>Bursa of Fabricius</tissue>
    </source>
</reference>
<evidence type="ECO:0000250" key="1">
    <source>
        <dbReference type="UniProtKB" id="Q3ZAQ7"/>
    </source>
</evidence>
<evidence type="ECO:0000250" key="2">
    <source>
        <dbReference type="UniProtKB" id="Q78T54"/>
    </source>
</evidence>
<evidence type="ECO:0000255" key="3">
    <source>
        <dbReference type="HAMAP-Rule" id="MF_03058"/>
    </source>
</evidence>
<proteinExistence type="inferred from homology"/>
<protein>
    <recommendedName>
        <fullName evidence="3">Vacuolar ATPase assembly integral membrane protein VMA21</fullName>
    </recommendedName>
</protein>
<keyword id="KW-0968">Cytoplasmic vesicle</keyword>
<keyword id="KW-0256">Endoplasmic reticulum</keyword>
<keyword id="KW-0472">Membrane</keyword>
<keyword id="KW-1185">Reference proteome</keyword>
<keyword id="KW-0812">Transmembrane</keyword>
<keyword id="KW-1133">Transmembrane helix</keyword>
<name>VMA21_CHICK</name>